<dbReference type="EMBL" id="CP000090">
    <property type="protein sequence ID" value="AAZ62513.1"/>
    <property type="molecule type" value="Genomic_DNA"/>
</dbReference>
<dbReference type="SMR" id="Q46WH0"/>
<dbReference type="STRING" id="264198.Reut_A3153"/>
<dbReference type="KEGG" id="reu:Reut_A3153"/>
<dbReference type="eggNOG" id="COG0203">
    <property type="taxonomic scope" value="Bacteria"/>
</dbReference>
<dbReference type="HOGENOM" id="CLU_074407_2_0_4"/>
<dbReference type="OrthoDB" id="9809073at2"/>
<dbReference type="GO" id="GO:0022625">
    <property type="term" value="C:cytosolic large ribosomal subunit"/>
    <property type="evidence" value="ECO:0007669"/>
    <property type="project" value="TreeGrafter"/>
</dbReference>
<dbReference type="GO" id="GO:0003735">
    <property type="term" value="F:structural constituent of ribosome"/>
    <property type="evidence" value="ECO:0007669"/>
    <property type="project" value="InterPro"/>
</dbReference>
<dbReference type="GO" id="GO:0006412">
    <property type="term" value="P:translation"/>
    <property type="evidence" value="ECO:0007669"/>
    <property type="project" value="UniProtKB-UniRule"/>
</dbReference>
<dbReference type="FunFam" id="3.90.1030.10:FF:000001">
    <property type="entry name" value="50S ribosomal protein L17"/>
    <property type="match status" value="1"/>
</dbReference>
<dbReference type="Gene3D" id="3.90.1030.10">
    <property type="entry name" value="Ribosomal protein L17"/>
    <property type="match status" value="1"/>
</dbReference>
<dbReference type="HAMAP" id="MF_01368">
    <property type="entry name" value="Ribosomal_bL17"/>
    <property type="match status" value="1"/>
</dbReference>
<dbReference type="InterPro" id="IPR000456">
    <property type="entry name" value="Ribosomal_bL17"/>
</dbReference>
<dbReference type="InterPro" id="IPR047859">
    <property type="entry name" value="Ribosomal_bL17_CS"/>
</dbReference>
<dbReference type="InterPro" id="IPR036373">
    <property type="entry name" value="Ribosomal_bL17_sf"/>
</dbReference>
<dbReference type="NCBIfam" id="TIGR00059">
    <property type="entry name" value="L17"/>
    <property type="match status" value="1"/>
</dbReference>
<dbReference type="PANTHER" id="PTHR14413:SF16">
    <property type="entry name" value="LARGE RIBOSOMAL SUBUNIT PROTEIN BL17M"/>
    <property type="match status" value="1"/>
</dbReference>
<dbReference type="PANTHER" id="PTHR14413">
    <property type="entry name" value="RIBOSOMAL PROTEIN L17"/>
    <property type="match status" value="1"/>
</dbReference>
<dbReference type="Pfam" id="PF01196">
    <property type="entry name" value="Ribosomal_L17"/>
    <property type="match status" value="1"/>
</dbReference>
<dbReference type="SUPFAM" id="SSF64263">
    <property type="entry name" value="Prokaryotic ribosomal protein L17"/>
    <property type="match status" value="1"/>
</dbReference>
<dbReference type="PROSITE" id="PS01167">
    <property type="entry name" value="RIBOSOMAL_L17"/>
    <property type="match status" value="1"/>
</dbReference>
<gene>
    <name evidence="1" type="primary">rplQ</name>
    <name type="ordered locus">Reut_A3153</name>
</gene>
<name>RL17_CUPPJ</name>
<comment type="subunit">
    <text evidence="1">Part of the 50S ribosomal subunit. Contacts protein L32.</text>
</comment>
<comment type="similarity">
    <text evidence="1">Belongs to the bacterial ribosomal protein bL17 family.</text>
</comment>
<organism>
    <name type="scientific">Cupriavidus pinatubonensis (strain JMP 134 / LMG 1197)</name>
    <name type="common">Cupriavidus necator (strain JMP 134)</name>
    <dbReference type="NCBI Taxonomy" id="264198"/>
    <lineage>
        <taxon>Bacteria</taxon>
        <taxon>Pseudomonadati</taxon>
        <taxon>Pseudomonadota</taxon>
        <taxon>Betaproteobacteria</taxon>
        <taxon>Burkholderiales</taxon>
        <taxon>Burkholderiaceae</taxon>
        <taxon>Cupriavidus</taxon>
    </lineage>
</organism>
<protein>
    <recommendedName>
        <fullName evidence="1">Large ribosomal subunit protein bL17</fullName>
    </recommendedName>
    <alternativeName>
        <fullName evidence="2">50S ribosomal protein L17</fullName>
    </alternativeName>
</protein>
<sequence>MRHRHGLRKLNRTSSHRLAMLRNMSNSLFQHELIKTTLPKAKELRKVVEPLITLAKKDTVANRRLAFARLRDRDMVTKLFTELGPRYNARPGGYTRILKFGFRQGDNAPMALVELVDRPEITEAPAEEAAE</sequence>
<proteinExistence type="inferred from homology"/>
<reference key="1">
    <citation type="journal article" date="2010" name="PLoS ONE">
        <title>The complete multipartite genome sequence of Cupriavidus necator JMP134, a versatile pollutant degrader.</title>
        <authorList>
            <person name="Lykidis A."/>
            <person name="Perez-Pantoja D."/>
            <person name="Ledger T."/>
            <person name="Mavromatis K."/>
            <person name="Anderson I.J."/>
            <person name="Ivanova N.N."/>
            <person name="Hooper S.D."/>
            <person name="Lapidus A."/>
            <person name="Lucas S."/>
            <person name="Gonzalez B."/>
            <person name="Kyrpides N.C."/>
        </authorList>
    </citation>
    <scope>NUCLEOTIDE SEQUENCE [LARGE SCALE GENOMIC DNA]</scope>
    <source>
        <strain>JMP134 / LMG 1197</strain>
    </source>
</reference>
<accession>Q46WH0</accession>
<feature type="chain" id="PRO_0000267920" description="Large ribosomal subunit protein bL17">
    <location>
        <begin position="1"/>
        <end position="131"/>
    </location>
</feature>
<keyword id="KW-0687">Ribonucleoprotein</keyword>
<keyword id="KW-0689">Ribosomal protein</keyword>
<evidence type="ECO:0000255" key="1">
    <source>
        <dbReference type="HAMAP-Rule" id="MF_01368"/>
    </source>
</evidence>
<evidence type="ECO:0000305" key="2"/>